<comment type="function">
    <text evidence="1">Catalyzes the conversion of 3-deoxy-D-arabino-heptulosonate 7-phosphate (DAHP) to dehydroquinate (DHQ).</text>
</comment>
<comment type="catalytic activity">
    <reaction evidence="1">
        <text>7-phospho-2-dehydro-3-deoxy-D-arabino-heptonate = 3-dehydroquinate + phosphate</text>
        <dbReference type="Rhea" id="RHEA:21968"/>
        <dbReference type="ChEBI" id="CHEBI:32364"/>
        <dbReference type="ChEBI" id="CHEBI:43474"/>
        <dbReference type="ChEBI" id="CHEBI:58394"/>
        <dbReference type="EC" id="4.2.3.4"/>
    </reaction>
</comment>
<comment type="cofactor">
    <cofactor evidence="1">
        <name>Co(2+)</name>
        <dbReference type="ChEBI" id="CHEBI:48828"/>
    </cofactor>
    <cofactor evidence="1">
        <name>Zn(2+)</name>
        <dbReference type="ChEBI" id="CHEBI:29105"/>
    </cofactor>
    <text evidence="1">Binds 1 divalent metal cation per subunit. Can use either Co(2+) or Zn(2+).</text>
</comment>
<comment type="cofactor">
    <cofactor evidence="1">
        <name>NAD(+)</name>
        <dbReference type="ChEBI" id="CHEBI:57540"/>
    </cofactor>
</comment>
<comment type="pathway">
    <text evidence="1">Metabolic intermediate biosynthesis; chorismate biosynthesis; chorismate from D-erythrose 4-phosphate and phosphoenolpyruvate: step 2/7.</text>
</comment>
<comment type="subcellular location">
    <subcellularLocation>
        <location evidence="1">Cytoplasm</location>
    </subcellularLocation>
</comment>
<comment type="similarity">
    <text evidence="1">Belongs to the sugar phosphate cyclases superfamily. Dehydroquinate synthase family.</text>
</comment>
<dbReference type="EC" id="4.2.3.4" evidence="1"/>
<dbReference type="EMBL" id="CP000653">
    <property type="protein sequence ID" value="ABP62457.1"/>
    <property type="molecule type" value="Genomic_DNA"/>
</dbReference>
<dbReference type="RefSeq" id="WP_015960763.1">
    <property type="nucleotide sequence ID" value="NC_009436.1"/>
</dbReference>
<dbReference type="SMR" id="A4WFH7"/>
<dbReference type="STRING" id="399742.Ent638_3802"/>
<dbReference type="KEGG" id="ent:Ent638_3802"/>
<dbReference type="eggNOG" id="COG0337">
    <property type="taxonomic scope" value="Bacteria"/>
</dbReference>
<dbReference type="HOGENOM" id="CLU_001201_0_2_6"/>
<dbReference type="OrthoDB" id="9806583at2"/>
<dbReference type="UniPathway" id="UPA00053">
    <property type="reaction ID" value="UER00085"/>
</dbReference>
<dbReference type="Proteomes" id="UP000000230">
    <property type="component" value="Chromosome"/>
</dbReference>
<dbReference type="GO" id="GO:0005737">
    <property type="term" value="C:cytoplasm"/>
    <property type="evidence" value="ECO:0007669"/>
    <property type="project" value="UniProtKB-SubCell"/>
</dbReference>
<dbReference type="GO" id="GO:0003856">
    <property type="term" value="F:3-dehydroquinate synthase activity"/>
    <property type="evidence" value="ECO:0007669"/>
    <property type="project" value="UniProtKB-UniRule"/>
</dbReference>
<dbReference type="GO" id="GO:0046872">
    <property type="term" value="F:metal ion binding"/>
    <property type="evidence" value="ECO:0007669"/>
    <property type="project" value="UniProtKB-KW"/>
</dbReference>
<dbReference type="GO" id="GO:0000166">
    <property type="term" value="F:nucleotide binding"/>
    <property type="evidence" value="ECO:0007669"/>
    <property type="project" value="UniProtKB-KW"/>
</dbReference>
<dbReference type="GO" id="GO:0008652">
    <property type="term" value="P:amino acid biosynthetic process"/>
    <property type="evidence" value="ECO:0007669"/>
    <property type="project" value="UniProtKB-KW"/>
</dbReference>
<dbReference type="GO" id="GO:0009073">
    <property type="term" value="P:aromatic amino acid family biosynthetic process"/>
    <property type="evidence" value="ECO:0007669"/>
    <property type="project" value="UniProtKB-KW"/>
</dbReference>
<dbReference type="GO" id="GO:0009423">
    <property type="term" value="P:chorismate biosynthetic process"/>
    <property type="evidence" value="ECO:0007669"/>
    <property type="project" value="UniProtKB-UniRule"/>
</dbReference>
<dbReference type="CDD" id="cd08195">
    <property type="entry name" value="DHQS"/>
    <property type="match status" value="1"/>
</dbReference>
<dbReference type="FunFam" id="1.20.1090.10:FF:000002">
    <property type="entry name" value="3-dehydroquinate synthase"/>
    <property type="match status" value="1"/>
</dbReference>
<dbReference type="FunFam" id="3.40.50.1970:FF:000001">
    <property type="entry name" value="3-dehydroquinate synthase"/>
    <property type="match status" value="1"/>
</dbReference>
<dbReference type="Gene3D" id="3.40.50.1970">
    <property type="match status" value="1"/>
</dbReference>
<dbReference type="Gene3D" id="1.20.1090.10">
    <property type="entry name" value="Dehydroquinate synthase-like - alpha domain"/>
    <property type="match status" value="1"/>
</dbReference>
<dbReference type="HAMAP" id="MF_00110">
    <property type="entry name" value="DHQ_synthase"/>
    <property type="match status" value="1"/>
</dbReference>
<dbReference type="InterPro" id="IPR050071">
    <property type="entry name" value="Dehydroquinate_synthase"/>
</dbReference>
<dbReference type="InterPro" id="IPR016037">
    <property type="entry name" value="DHQ_synth_AroB"/>
</dbReference>
<dbReference type="InterPro" id="IPR030963">
    <property type="entry name" value="DHQ_synth_fam"/>
</dbReference>
<dbReference type="InterPro" id="IPR030960">
    <property type="entry name" value="DHQS/DOIS_N"/>
</dbReference>
<dbReference type="InterPro" id="IPR056179">
    <property type="entry name" value="DHQS_C"/>
</dbReference>
<dbReference type="NCBIfam" id="TIGR01357">
    <property type="entry name" value="aroB"/>
    <property type="match status" value="1"/>
</dbReference>
<dbReference type="PANTHER" id="PTHR43622">
    <property type="entry name" value="3-DEHYDROQUINATE SYNTHASE"/>
    <property type="match status" value="1"/>
</dbReference>
<dbReference type="PANTHER" id="PTHR43622:SF7">
    <property type="entry name" value="3-DEHYDROQUINATE SYNTHASE, CHLOROPLASTIC"/>
    <property type="match status" value="1"/>
</dbReference>
<dbReference type="Pfam" id="PF01761">
    <property type="entry name" value="DHQ_synthase"/>
    <property type="match status" value="1"/>
</dbReference>
<dbReference type="Pfam" id="PF24621">
    <property type="entry name" value="DHQS_C"/>
    <property type="match status" value="1"/>
</dbReference>
<dbReference type="PIRSF" id="PIRSF001455">
    <property type="entry name" value="DHQ_synth"/>
    <property type="match status" value="1"/>
</dbReference>
<dbReference type="SUPFAM" id="SSF56796">
    <property type="entry name" value="Dehydroquinate synthase-like"/>
    <property type="match status" value="1"/>
</dbReference>
<feature type="chain" id="PRO_1000094514" description="3-dehydroquinate synthase">
    <location>
        <begin position="1"/>
        <end position="362"/>
    </location>
</feature>
<feature type="binding site" evidence="1">
    <location>
        <begin position="71"/>
        <end position="76"/>
    </location>
    <ligand>
        <name>NAD(+)</name>
        <dbReference type="ChEBI" id="CHEBI:57540"/>
    </ligand>
</feature>
<feature type="binding site" evidence="1">
    <location>
        <begin position="105"/>
        <end position="109"/>
    </location>
    <ligand>
        <name>NAD(+)</name>
        <dbReference type="ChEBI" id="CHEBI:57540"/>
    </ligand>
</feature>
<feature type="binding site" evidence="1">
    <location>
        <begin position="129"/>
        <end position="130"/>
    </location>
    <ligand>
        <name>NAD(+)</name>
        <dbReference type="ChEBI" id="CHEBI:57540"/>
    </ligand>
</feature>
<feature type="binding site" evidence="1">
    <location>
        <position position="142"/>
    </location>
    <ligand>
        <name>NAD(+)</name>
        <dbReference type="ChEBI" id="CHEBI:57540"/>
    </ligand>
</feature>
<feature type="binding site" evidence="1">
    <location>
        <position position="151"/>
    </location>
    <ligand>
        <name>NAD(+)</name>
        <dbReference type="ChEBI" id="CHEBI:57540"/>
    </ligand>
</feature>
<feature type="binding site" evidence="1">
    <location>
        <begin position="169"/>
        <end position="172"/>
    </location>
    <ligand>
        <name>NAD(+)</name>
        <dbReference type="ChEBI" id="CHEBI:57540"/>
    </ligand>
</feature>
<feature type="binding site" evidence="1">
    <location>
        <position position="184"/>
    </location>
    <ligand>
        <name>Zn(2+)</name>
        <dbReference type="ChEBI" id="CHEBI:29105"/>
    </ligand>
</feature>
<feature type="binding site" evidence="1">
    <location>
        <position position="247"/>
    </location>
    <ligand>
        <name>Zn(2+)</name>
        <dbReference type="ChEBI" id="CHEBI:29105"/>
    </ligand>
</feature>
<feature type="binding site" evidence="1">
    <location>
        <position position="264"/>
    </location>
    <ligand>
        <name>Zn(2+)</name>
        <dbReference type="ChEBI" id="CHEBI:29105"/>
    </ligand>
</feature>
<accession>A4WFH7</accession>
<organism>
    <name type="scientific">Enterobacter sp. (strain 638)</name>
    <dbReference type="NCBI Taxonomy" id="399742"/>
    <lineage>
        <taxon>Bacteria</taxon>
        <taxon>Pseudomonadati</taxon>
        <taxon>Pseudomonadota</taxon>
        <taxon>Gammaproteobacteria</taxon>
        <taxon>Enterobacterales</taxon>
        <taxon>Enterobacteriaceae</taxon>
        <taxon>Enterobacter</taxon>
    </lineage>
</organism>
<evidence type="ECO:0000255" key="1">
    <source>
        <dbReference type="HAMAP-Rule" id="MF_00110"/>
    </source>
</evidence>
<sequence length="362" mass="39061">MERITVTLGERSYPITIAAGLFNDPASFLPLKAGDQAMLVTNETLAPLYLDKIRHLLEQAGVNVDSVILPDGEQYKSLAVLETVFTALLQKPHGRDTTLLALGGGVVGDLTGFAAASYQRGVRFIQIPTTLLSQVDSSVGGKTAVNHPLGKNMIGAFYQPASVVVDLDCLNTLPQRELASGLAEVIKYGIILDGEFFSWLEDNMDALLNLDGKALAYCIRRCCELKAEVVAADERETGLRALLNLGHTFGHAIEAEMGYGNWLHGEAVAAGMVMAARTSERLGQFKQEETQRIITLLERAGLPVTGPREMSSHAYLPHMMRDKKVLAGEMRLVLPLAIGKSEVRGGVPHDVVLGAIADCQQA</sequence>
<reference key="1">
    <citation type="journal article" date="2010" name="PLoS Genet.">
        <title>Genome sequence of the plant growth promoting endophytic bacterium Enterobacter sp. 638.</title>
        <authorList>
            <person name="Taghavi S."/>
            <person name="van der Lelie D."/>
            <person name="Hoffman A."/>
            <person name="Zhang Y.B."/>
            <person name="Walla M.D."/>
            <person name="Vangronsveld J."/>
            <person name="Newman L."/>
            <person name="Monchy S."/>
        </authorList>
    </citation>
    <scope>NUCLEOTIDE SEQUENCE [LARGE SCALE GENOMIC DNA]</scope>
    <source>
        <strain>638</strain>
    </source>
</reference>
<protein>
    <recommendedName>
        <fullName evidence="1">3-dehydroquinate synthase</fullName>
        <shortName evidence="1">DHQS</shortName>
        <ecNumber evidence="1">4.2.3.4</ecNumber>
    </recommendedName>
</protein>
<name>AROB_ENT38</name>
<gene>
    <name evidence="1" type="primary">aroB</name>
    <name type="ordered locus">Ent638_3802</name>
</gene>
<proteinExistence type="inferred from homology"/>
<keyword id="KW-0028">Amino-acid biosynthesis</keyword>
<keyword id="KW-0057">Aromatic amino acid biosynthesis</keyword>
<keyword id="KW-0170">Cobalt</keyword>
<keyword id="KW-0963">Cytoplasm</keyword>
<keyword id="KW-0456">Lyase</keyword>
<keyword id="KW-0479">Metal-binding</keyword>
<keyword id="KW-0520">NAD</keyword>
<keyword id="KW-0547">Nucleotide-binding</keyword>
<keyword id="KW-0862">Zinc</keyword>